<accession>Q13239</accession>
<accession>B7Z4J2</accession>
<accession>B7Z4L6</accession>
<accession>Q6FI01</accession>
<accession>Q9UMQ8</accession>
<dbReference type="EMBL" id="U30473">
    <property type="protein sequence ID" value="AAC50357.1"/>
    <property type="molecule type" value="mRNA"/>
</dbReference>
<dbReference type="EMBL" id="D89077">
    <property type="protein sequence ID" value="BAA13758.1"/>
    <property type="molecule type" value="mRNA"/>
</dbReference>
<dbReference type="EMBL" id="U44403">
    <property type="protein sequence ID" value="AAC27662.1"/>
    <property type="molecule type" value="mRNA"/>
</dbReference>
<dbReference type="EMBL" id="CR536537">
    <property type="protein sequence ID" value="CAG38774.1"/>
    <property type="molecule type" value="mRNA"/>
</dbReference>
<dbReference type="EMBL" id="AK297423">
    <property type="protein sequence ID" value="BAH12578.1"/>
    <property type="molecule type" value="mRNA"/>
</dbReference>
<dbReference type="EMBL" id="AK297519">
    <property type="protein sequence ID" value="BAH12602.1"/>
    <property type="molecule type" value="mRNA"/>
</dbReference>
<dbReference type="EMBL" id="AK312584">
    <property type="protein sequence ID" value="BAG35478.1"/>
    <property type="status" value="ALT_INIT"/>
    <property type="molecule type" value="mRNA"/>
</dbReference>
<dbReference type="EMBL" id="AF235100">
    <property type="status" value="NOT_ANNOTATED_CDS"/>
    <property type="molecule type" value="Genomic_DNA"/>
</dbReference>
<dbReference type="EMBL" id="AF305872">
    <property type="status" value="NOT_ANNOTATED_CDS"/>
    <property type="molecule type" value="Genomic_DNA"/>
</dbReference>
<dbReference type="EMBL" id="CH471060">
    <property type="protein sequence ID" value="EAW92159.1"/>
    <property type="molecule type" value="Genomic_DNA"/>
</dbReference>
<dbReference type="EMBL" id="BC007042">
    <property type="protein sequence ID" value="AAH07042.1"/>
    <property type="status" value="ALT_INIT"/>
    <property type="molecule type" value="mRNA"/>
</dbReference>
<dbReference type="EMBL" id="AJ238591">
    <property type="protein sequence ID" value="CAB53536.1"/>
    <property type="molecule type" value="mRNA"/>
</dbReference>
<dbReference type="CCDS" id="CCDS47922.1">
    <molecule id="Q13239-3"/>
</dbReference>
<dbReference type="CCDS" id="CCDS47923.1">
    <molecule id="Q13239-5"/>
</dbReference>
<dbReference type="CCDS" id="CCDS6370.1">
    <molecule id="Q13239-1"/>
</dbReference>
<dbReference type="CCDS" id="CCDS64977.1">
    <molecule id="Q13239-2"/>
</dbReference>
<dbReference type="CCDS" id="CCDS64978.1">
    <molecule id="Q13239-4"/>
</dbReference>
<dbReference type="RefSeq" id="NP_001039021.1">
    <molecule id="Q13239-1"/>
    <property type="nucleotide sequence ID" value="NM_001045556.3"/>
</dbReference>
<dbReference type="RefSeq" id="NP_001039022.2">
    <molecule id="Q13239-3"/>
    <property type="nucleotide sequence ID" value="NM_001045557.3"/>
</dbReference>
<dbReference type="RefSeq" id="NP_001269893.1">
    <molecule id="Q13239-4"/>
    <property type="nucleotide sequence ID" value="NM_001282964.2"/>
</dbReference>
<dbReference type="RefSeq" id="NP_001269894.1">
    <molecule id="Q13239-2"/>
    <property type="nucleotide sequence ID" value="NM_001282965.2"/>
</dbReference>
<dbReference type="RefSeq" id="NP_006739.2">
    <molecule id="Q13239-5"/>
    <property type="nucleotide sequence ID" value="NM_006748.4"/>
</dbReference>
<dbReference type="RefSeq" id="XP_016869228.1">
    <property type="nucleotide sequence ID" value="XM_017013739.1"/>
</dbReference>
<dbReference type="RefSeq" id="XP_047278063.1">
    <molecule id="Q13239-1"/>
    <property type="nucleotide sequence ID" value="XM_047422107.1"/>
</dbReference>
<dbReference type="RefSeq" id="XP_047278064.1">
    <molecule id="Q13239-5"/>
    <property type="nucleotide sequence ID" value="XM_047422108.1"/>
</dbReference>
<dbReference type="RefSeq" id="XP_047278065.1">
    <molecule id="Q13239-2"/>
    <property type="nucleotide sequence ID" value="XM_047422109.1"/>
</dbReference>
<dbReference type="RefSeq" id="XP_047278066.1">
    <molecule id="Q13239-2"/>
    <property type="nucleotide sequence ID" value="XM_047422110.1"/>
</dbReference>
<dbReference type="RefSeq" id="XP_054216996.1">
    <molecule id="Q13239-1"/>
    <property type="nucleotide sequence ID" value="XM_054361021.1"/>
</dbReference>
<dbReference type="RefSeq" id="XP_054216997.1">
    <molecule id="Q13239-5"/>
    <property type="nucleotide sequence ID" value="XM_054361022.1"/>
</dbReference>
<dbReference type="RefSeq" id="XP_054216998.1">
    <molecule id="Q13239-2"/>
    <property type="nucleotide sequence ID" value="XM_054361023.1"/>
</dbReference>
<dbReference type="RefSeq" id="XP_054216999.1">
    <molecule id="Q13239-2"/>
    <property type="nucleotide sequence ID" value="XM_054361024.1"/>
</dbReference>
<dbReference type="PDB" id="2CUD">
    <property type="method" value="NMR"/>
    <property type="chains" value="A=15-80"/>
</dbReference>
<dbReference type="PDBsum" id="2CUD"/>
<dbReference type="BMRB" id="Q13239"/>
<dbReference type="SMR" id="Q13239"/>
<dbReference type="BioGRID" id="112394">
    <property type="interactions" value="26"/>
</dbReference>
<dbReference type="FunCoup" id="Q13239">
    <property type="interactions" value="1369"/>
</dbReference>
<dbReference type="IntAct" id="Q13239">
    <property type="interactions" value="38"/>
</dbReference>
<dbReference type="MINT" id="Q13239"/>
<dbReference type="STRING" id="9606.ENSP00000394049"/>
<dbReference type="iPTMnet" id="Q13239"/>
<dbReference type="PhosphoSitePlus" id="Q13239"/>
<dbReference type="BioMuta" id="SLA"/>
<dbReference type="DMDM" id="30173237"/>
<dbReference type="MassIVE" id="Q13239"/>
<dbReference type="PaxDb" id="9606-ENSP00000394049"/>
<dbReference type="PeptideAtlas" id="Q13239"/>
<dbReference type="ProteomicsDB" id="59242">
    <molecule id="Q13239-1"/>
</dbReference>
<dbReference type="ProteomicsDB" id="6601"/>
<dbReference type="ProteomicsDB" id="6612"/>
<dbReference type="Antibodypedia" id="1995">
    <property type="antibodies" value="125 antibodies from 27 providers"/>
</dbReference>
<dbReference type="DNASU" id="6503"/>
<dbReference type="Ensembl" id="ENST00000338087.10">
    <molecule id="Q13239-1"/>
    <property type="protein sequence ID" value="ENSP00000337548.5"/>
    <property type="gene ID" value="ENSG00000155926.14"/>
</dbReference>
<dbReference type="Ensembl" id="ENST00000395352.7">
    <molecule id="Q13239-3"/>
    <property type="protein sequence ID" value="ENSP00000378759.3"/>
    <property type="gene ID" value="ENSG00000155926.14"/>
</dbReference>
<dbReference type="Ensembl" id="ENST00000427060.6">
    <molecule id="Q13239-5"/>
    <property type="protein sequence ID" value="ENSP00000394049.2"/>
    <property type="gene ID" value="ENSG00000155926.14"/>
</dbReference>
<dbReference type="Ensembl" id="ENST00000517648.5">
    <molecule id="Q13239-4"/>
    <property type="protein sequence ID" value="ENSP00000428559.1"/>
    <property type="gene ID" value="ENSG00000155926.14"/>
</dbReference>
<dbReference type="Ensembl" id="ENST00000524345.5">
    <molecule id="Q13239-2"/>
    <property type="protein sequence ID" value="ENSP00000427928.1"/>
    <property type="gene ID" value="ENSG00000155926.14"/>
</dbReference>
<dbReference type="GeneID" id="6503"/>
<dbReference type="KEGG" id="hsa:6503"/>
<dbReference type="MANE-Select" id="ENST00000338087.10">
    <property type="protein sequence ID" value="ENSP00000337548.5"/>
    <property type="RefSeq nucleotide sequence ID" value="NM_001045556.3"/>
    <property type="RefSeq protein sequence ID" value="NP_001039021.1"/>
</dbReference>
<dbReference type="UCSC" id="uc003ytz.4">
    <molecule id="Q13239-1"/>
    <property type="organism name" value="human"/>
</dbReference>
<dbReference type="AGR" id="HGNC:10902"/>
<dbReference type="CTD" id="6503"/>
<dbReference type="DisGeNET" id="6503"/>
<dbReference type="GeneCards" id="SLA"/>
<dbReference type="HGNC" id="HGNC:10902">
    <property type="gene designation" value="SLA"/>
</dbReference>
<dbReference type="HPA" id="ENSG00000155926">
    <property type="expression patterns" value="Group enriched (bone marrow, lymphoid tissue)"/>
</dbReference>
<dbReference type="MIM" id="601099">
    <property type="type" value="gene"/>
</dbReference>
<dbReference type="neXtProt" id="NX_Q13239"/>
<dbReference type="OpenTargets" id="ENSG00000155926"/>
<dbReference type="PharmGKB" id="PA35802"/>
<dbReference type="VEuPathDB" id="HostDB:ENSG00000155926"/>
<dbReference type="eggNOG" id="ENOG502QPWY">
    <property type="taxonomic scope" value="Eukaryota"/>
</dbReference>
<dbReference type="GeneTree" id="ENSGT00940000159104"/>
<dbReference type="HOGENOM" id="CLU_084503_1_0_1"/>
<dbReference type="InParanoid" id="Q13239"/>
<dbReference type="OrthoDB" id="9924021at2759"/>
<dbReference type="PAN-GO" id="Q13239">
    <property type="GO annotations" value="7 GO annotations based on evolutionary models"/>
</dbReference>
<dbReference type="PhylomeDB" id="Q13239"/>
<dbReference type="PathwayCommons" id="Q13239"/>
<dbReference type="Reactome" id="R-HSA-9706369">
    <property type="pathway name" value="Negative regulation of FLT3"/>
</dbReference>
<dbReference type="SignaLink" id="Q13239"/>
<dbReference type="SIGNOR" id="Q13239"/>
<dbReference type="BioGRID-ORCS" id="6503">
    <property type="hits" value="22 hits in 1155 CRISPR screens"/>
</dbReference>
<dbReference type="ChiTaRS" id="SLA">
    <property type="organism name" value="human"/>
</dbReference>
<dbReference type="EvolutionaryTrace" id="Q13239"/>
<dbReference type="GenomeRNAi" id="6503"/>
<dbReference type="Pharos" id="Q13239">
    <property type="development level" value="Tbio"/>
</dbReference>
<dbReference type="PRO" id="PR:Q13239"/>
<dbReference type="Proteomes" id="UP000005640">
    <property type="component" value="Chromosome 8"/>
</dbReference>
<dbReference type="RNAct" id="Q13239">
    <property type="molecule type" value="protein"/>
</dbReference>
<dbReference type="Bgee" id="ENSG00000155926">
    <property type="expression patterns" value="Expressed in cortical plate and 179 other cell types or tissues"/>
</dbReference>
<dbReference type="ExpressionAtlas" id="Q13239">
    <property type="expression patterns" value="baseline and differential"/>
</dbReference>
<dbReference type="GO" id="GO:0008180">
    <property type="term" value="C:COP9 signalosome"/>
    <property type="evidence" value="ECO:0000318"/>
    <property type="project" value="GO_Central"/>
</dbReference>
<dbReference type="GO" id="GO:0005737">
    <property type="term" value="C:cytoplasm"/>
    <property type="evidence" value="ECO:0000318"/>
    <property type="project" value="GO_Central"/>
</dbReference>
<dbReference type="GO" id="GO:0005829">
    <property type="term" value="C:cytosol"/>
    <property type="evidence" value="ECO:0000304"/>
    <property type="project" value="Reactome"/>
</dbReference>
<dbReference type="GO" id="GO:0005768">
    <property type="term" value="C:endosome"/>
    <property type="evidence" value="ECO:0007669"/>
    <property type="project" value="UniProtKB-SubCell"/>
</dbReference>
<dbReference type="GO" id="GO:0005654">
    <property type="term" value="C:nucleoplasm"/>
    <property type="evidence" value="ECO:0000318"/>
    <property type="project" value="GO_Central"/>
</dbReference>
<dbReference type="GO" id="GO:0005886">
    <property type="term" value="C:plasma membrane"/>
    <property type="evidence" value="ECO:0000318"/>
    <property type="project" value="GO_Central"/>
</dbReference>
<dbReference type="GO" id="GO:0005154">
    <property type="term" value="F:epidermal growth factor receptor binding"/>
    <property type="evidence" value="ECO:0000318"/>
    <property type="project" value="GO_Central"/>
</dbReference>
<dbReference type="GO" id="GO:0001784">
    <property type="term" value="F:phosphotyrosine residue binding"/>
    <property type="evidence" value="ECO:0000318"/>
    <property type="project" value="GO_Central"/>
</dbReference>
<dbReference type="GO" id="GO:0043408">
    <property type="term" value="P:regulation of MAPK cascade"/>
    <property type="evidence" value="ECO:0000318"/>
    <property type="project" value="GO_Central"/>
</dbReference>
<dbReference type="GO" id="GO:0007165">
    <property type="term" value="P:signal transduction"/>
    <property type="evidence" value="ECO:0000318"/>
    <property type="project" value="GO_Central"/>
</dbReference>
<dbReference type="CDD" id="cd10344">
    <property type="entry name" value="SH2_SLAP"/>
    <property type="match status" value="1"/>
</dbReference>
<dbReference type="CDD" id="cd12010">
    <property type="entry name" value="SH3_SLAP"/>
    <property type="match status" value="1"/>
</dbReference>
<dbReference type="FunFam" id="2.30.30.40:FF:000134">
    <property type="entry name" value="src-like-adapter isoform X1"/>
    <property type="match status" value="1"/>
</dbReference>
<dbReference type="FunFam" id="3.30.505.10:FF:000039">
    <property type="entry name" value="src-like-adapter isoform X1"/>
    <property type="match status" value="1"/>
</dbReference>
<dbReference type="Gene3D" id="3.30.505.10">
    <property type="entry name" value="SH2 domain"/>
    <property type="match status" value="1"/>
</dbReference>
<dbReference type="Gene3D" id="2.30.30.40">
    <property type="entry name" value="SH3 Domains"/>
    <property type="match status" value="1"/>
</dbReference>
<dbReference type="InterPro" id="IPR043539">
    <property type="entry name" value="Grb2-like"/>
</dbReference>
<dbReference type="InterPro" id="IPR000980">
    <property type="entry name" value="SH2"/>
</dbReference>
<dbReference type="InterPro" id="IPR036860">
    <property type="entry name" value="SH2_dom_sf"/>
</dbReference>
<dbReference type="InterPro" id="IPR036028">
    <property type="entry name" value="SH3-like_dom_sf"/>
</dbReference>
<dbReference type="InterPro" id="IPR001452">
    <property type="entry name" value="SH3_domain"/>
</dbReference>
<dbReference type="InterPro" id="IPR035052">
    <property type="entry name" value="SLAP_SH2"/>
</dbReference>
<dbReference type="InterPro" id="IPR035596">
    <property type="entry name" value="SLAP_SH3"/>
</dbReference>
<dbReference type="PANTHER" id="PTHR46037">
    <property type="entry name" value="PROTEIN ENHANCER OF SEVENLESS 2B"/>
    <property type="match status" value="1"/>
</dbReference>
<dbReference type="Pfam" id="PF00017">
    <property type="entry name" value="SH2"/>
    <property type="match status" value="1"/>
</dbReference>
<dbReference type="Pfam" id="PF00018">
    <property type="entry name" value="SH3_1"/>
    <property type="match status" value="1"/>
</dbReference>
<dbReference type="PRINTS" id="PR00401">
    <property type="entry name" value="SH2DOMAIN"/>
</dbReference>
<dbReference type="SMART" id="SM00252">
    <property type="entry name" value="SH2"/>
    <property type="match status" value="1"/>
</dbReference>
<dbReference type="SMART" id="SM00326">
    <property type="entry name" value="SH3"/>
    <property type="match status" value="1"/>
</dbReference>
<dbReference type="SUPFAM" id="SSF55550">
    <property type="entry name" value="SH2 domain"/>
    <property type="match status" value="1"/>
</dbReference>
<dbReference type="SUPFAM" id="SSF50044">
    <property type="entry name" value="SH3-domain"/>
    <property type="match status" value="1"/>
</dbReference>
<dbReference type="PROSITE" id="PS50001">
    <property type="entry name" value="SH2"/>
    <property type="match status" value="1"/>
</dbReference>
<dbReference type="PROSITE" id="PS50002">
    <property type="entry name" value="SH3"/>
    <property type="match status" value="1"/>
</dbReference>
<proteinExistence type="evidence at protein level"/>
<evidence type="ECO:0000250" key="1"/>
<evidence type="ECO:0000250" key="2">
    <source>
        <dbReference type="UniProtKB" id="P59622"/>
    </source>
</evidence>
<evidence type="ECO:0000250" key="3">
    <source>
        <dbReference type="UniProtKB" id="Q60898"/>
    </source>
</evidence>
<evidence type="ECO:0000255" key="4">
    <source>
        <dbReference type="PROSITE-ProRule" id="PRU00191"/>
    </source>
</evidence>
<evidence type="ECO:0000255" key="5">
    <source>
        <dbReference type="PROSITE-ProRule" id="PRU00192"/>
    </source>
</evidence>
<evidence type="ECO:0000269" key="6">
    <source>
    </source>
</evidence>
<evidence type="ECO:0000269" key="7">
    <source>
    </source>
</evidence>
<evidence type="ECO:0000269" key="8">
    <source>
    </source>
</evidence>
<evidence type="ECO:0000269" key="9">
    <source>
    </source>
</evidence>
<evidence type="ECO:0000303" key="10">
    <source>
    </source>
</evidence>
<evidence type="ECO:0000303" key="11">
    <source>
    </source>
</evidence>
<evidence type="ECO:0000305" key="12"/>
<evidence type="ECO:0007829" key="13">
    <source>
        <dbReference type="PDB" id="2CUD"/>
    </source>
</evidence>
<sequence length="276" mass="31156">MGNSMKSTPAPAERPLPNPEGLDSDFLAVLSDYPSPDISPPIFRRGEKLRVISDEGGWWKAISLSTGRESYIPGICVARVYHGWLFEGLGRDKAEELLQLPDTKVGSFMIRESETKKGFYSLSVRHRQVKHYRIFRLPNNWYYISPRLTFQCLEDLVNHYSEVADGLCCVLTTPCLTQSTAAPAVRASSSPVTLRQKTVDWRRVSRLQEDPEGTENPLGVDESLFSYGLRESIASYLSLTSEDNTSFDRKKKSISLMYGGSKRKSSFFSSPPYFED</sequence>
<feature type="initiator methionine" description="Removed" evidence="3">
    <location>
        <position position="1"/>
    </location>
</feature>
<feature type="chain" id="PRO_0000071946" description="Src-like-adapter">
    <location>
        <begin position="2"/>
        <end position="276"/>
    </location>
</feature>
<feature type="domain" description="SH3" evidence="5">
    <location>
        <begin position="22"/>
        <end position="82"/>
    </location>
</feature>
<feature type="domain" description="SH2" evidence="4">
    <location>
        <begin position="84"/>
        <end position="175"/>
    </location>
</feature>
<feature type="region of interest" description="SLA C-terminal">
    <location>
        <begin position="212"/>
        <end position="276"/>
    </location>
</feature>
<feature type="modified residue" description="Phosphoserine" evidence="2">
    <location>
        <position position="253"/>
    </location>
</feature>
<feature type="modified residue" description="Phosphotyrosine" evidence="3">
    <location>
        <position position="273"/>
    </location>
</feature>
<feature type="lipid moiety-binding region" description="N-myristoyl glycine" evidence="1">
    <location>
        <position position="2"/>
    </location>
</feature>
<feature type="splice variant" id="VSP_055122" description="In isoform 2." evidence="10">
    <location>
        <begin position="1"/>
        <end position="108"/>
    </location>
</feature>
<feature type="splice variant" id="VSP_055123" description="In isoform 3 and isoform 4." evidence="10">
    <original>M</original>
    <variation>MLHRLWASPAAPGKKKEM</variation>
    <location>
        <position position="1"/>
    </location>
</feature>
<feature type="splice variant" id="VSP_055124" description="In isoform 5." evidence="11">
    <original>M</original>
    <variation>MLSKLGHSPLGGLRARLTFPVCLLYHRLWASPAAPGKKKEM</variation>
    <location>
        <position position="1"/>
    </location>
</feature>
<feature type="splice variant" id="VSP_055125" description="In isoform 4." evidence="10">
    <location>
        <begin position="118"/>
        <end position="161"/>
    </location>
</feature>
<feature type="sequence variant" id="VAR_061706" description="In dbSNP:rs4486183.">
    <original>P</original>
    <variation>T</variation>
    <location>
        <position position="15"/>
    </location>
</feature>
<feature type="mutagenesis site" description="Strongly reduces interaction with ZAP70, CD3Z, SYK and LAT." evidence="6">
    <original>R</original>
    <variation>K</variation>
    <location>
        <position position="111"/>
    </location>
</feature>
<feature type="mutagenesis site" description="Abolishes interaction with CBL. Does not affect dimerization; when associated with S-224 and S-229." evidence="6">
    <original>L</original>
    <variation>S</variation>
    <location>
        <position position="218"/>
    </location>
</feature>
<feature type="mutagenesis site" description="Abolishes interaction with CBL. Does not affect dimerization; when associated with S-218 and S-229." evidence="6">
    <original>L</original>
    <variation>S</variation>
    <location>
        <position position="224"/>
    </location>
</feature>
<feature type="mutagenesis site" description="Abolishes interaction with CBL. Does not affect dimerization; when associated with S-218 and S-224." evidence="6">
    <original>L</original>
    <variation>S</variation>
    <location>
        <position position="229"/>
    </location>
</feature>
<feature type="mutagenesis site" description="Abolishes interaction with CBL. Slightly affects dimerization." evidence="6">
    <original>LSL</original>
    <variation>QSQ</variation>
    <location>
        <begin position="237"/>
        <end position="239"/>
    </location>
</feature>
<feature type="sequence conflict" description="In Ref. 10; CAB53536." evidence="12" ref="10">
    <original>Y</original>
    <variation>D</variation>
    <location>
        <position position="71"/>
    </location>
</feature>
<feature type="strand" evidence="13">
    <location>
        <begin position="20"/>
        <end position="22"/>
    </location>
</feature>
<feature type="strand" evidence="13">
    <location>
        <begin position="26"/>
        <end position="31"/>
    </location>
</feature>
<feature type="turn" evidence="13">
    <location>
        <begin position="36"/>
        <end position="38"/>
    </location>
</feature>
<feature type="strand" evidence="13">
    <location>
        <begin position="48"/>
        <end position="55"/>
    </location>
</feature>
<feature type="strand" evidence="13">
    <location>
        <begin position="58"/>
        <end position="63"/>
    </location>
</feature>
<feature type="turn" evidence="13">
    <location>
        <begin position="64"/>
        <end position="66"/>
    </location>
</feature>
<feature type="strand" evidence="13">
    <location>
        <begin position="69"/>
        <end position="73"/>
    </location>
</feature>
<feature type="helix" evidence="13">
    <location>
        <begin position="74"/>
        <end position="76"/>
    </location>
</feature>
<feature type="strand" evidence="13">
    <location>
        <begin position="77"/>
        <end position="80"/>
    </location>
</feature>
<gene>
    <name type="primary">SLA</name>
    <name type="synonym">SLAP</name>
    <name type="synonym">SLAP1</name>
</gene>
<comment type="function">
    <text evidence="6 7">Adapter protein, which negatively regulates T-cell receptor (TCR) signaling. Inhibits T-cell antigen-receptor induced activation of nuclear factor of activated T-cells. Involved in the negative regulation of positive selection and mitosis of T-cells. May act by linking signaling proteins such as ZAP70 with CBL, leading to a CBL dependent degradation of signaling proteins.</text>
</comment>
<comment type="subunit">
    <text evidence="1 6">Interacts with EPHA2, VAV1, LCP2 and PDGFRB (By similarity). Homodimer. Homodimerization and interaction with phosphorylated CBL occurs via its C-terminal domain. Interacts with phosphorylated proteins ZAP70, CD3Z, SYK and LAT via its SH2 domain.</text>
</comment>
<comment type="interaction">
    <interactant intactId="EBI-726214">
        <id>Q13239</id>
    </interactant>
    <interactant intactId="EBI-297353">
        <id>P00533</id>
        <label>EGFR</label>
    </interactant>
    <organismsDiffer>false</organismsDiffer>
    <experiments>3</experiments>
</comment>
<comment type="interaction">
    <interactant intactId="EBI-726214">
        <id>Q13239</id>
    </interactant>
    <interactant intactId="EBI-81236">
        <id>Q15596</id>
        <label>NCOA2</label>
    </interactant>
    <organismsDiffer>false</organismsDiffer>
    <experiments>2</experiments>
</comment>
<comment type="interaction">
    <interactant intactId="EBI-726214">
        <id>Q13239</id>
    </interactant>
    <interactant intactId="EBI-641237">
        <id>P09619</id>
        <label>PDGFRB</label>
    </interactant>
    <organismsDiffer>false</organismsDiffer>
    <experiments>4</experiments>
</comment>
<comment type="interaction">
    <interactant intactId="EBI-17630587">
        <id>Q13239-3</id>
    </interactant>
    <interactant intactId="EBI-11096309">
        <id>Q9NYB9-2</id>
        <label>ABI2</label>
    </interactant>
    <organismsDiffer>false</organismsDiffer>
    <experiments>3</experiments>
</comment>
<comment type="interaction">
    <interactant intactId="EBI-17630587">
        <id>Q13239-3</id>
    </interactant>
    <interactant intactId="EBI-2105445">
        <id>P51451</id>
        <label>BLK</label>
    </interactant>
    <organismsDiffer>false</organismsDiffer>
    <experiments>3</experiments>
</comment>
<comment type="interaction">
    <interactant intactId="EBI-17630587">
        <id>Q13239-3</id>
    </interactant>
    <interactant intactId="EBI-7950783">
        <id>Q96JP2</id>
        <label>MYO15B</label>
    </interactant>
    <organismsDiffer>false</organismsDiffer>
    <experiments>3</experiments>
</comment>
<comment type="interaction">
    <interactant intactId="EBI-17630587">
        <id>Q13239-3</id>
    </interactant>
    <interactant intactId="EBI-1383632">
        <id>Q13882</id>
        <label>PTK6</label>
    </interactant>
    <organismsDiffer>false</organismsDiffer>
    <experiments>3</experiments>
</comment>
<comment type="interaction">
    <interactant intactId="EBI-17630587">
        <id>Q13239-3</id>
    </interactant>
    <interactant intactId="EBI-347462">
        <id>P47897</id>
        <label>QARS1</label>
    </interactant>
    <organismsDiffer>false</organismsDiffer>
    <experiments>3</experiments>
</comment>
<comment type="subcellular location">
    <subcellularLocation>
        <location evidence="1">Cytoplasm</location>
    </subcellularLocation>
    <subcellularLocation>
        <location evidence="1">Endosome</location>
    </subcellularLocation>
    <text evidence="1">Colocalizes with endosomes.</text>
</comment>
<comment type="alternative products">
    <event type="alternative splicing"/>
    <isoform>
        <id>Q13239-1</id>
        <name>1</name>
        <sequence type="displayed"/>
    </isoform>
    <isoform>
        <id>Q13239-2</id>
        <name>2</name>
        <sequence type="described" ref="VSP_055122"/>
    </isoform>
    <isoform>
        <id>Q13239-3</id>
        <name>3</name>
        <sequence type="described" ref="VSP_055123"/>
    </isoform>
    <isoform>
        <id>Q13239-4</id>
        <name>4</name>
        <sequence type="described" ref="VSP_055123 VSP_055125"/>
    </isoform>
    <isoform>
        <id>Q13239-5</id>
        <name>5</name>
        <sequence type="described" ref="VSP_055124"/>
    </isoform>
</comment>
<comment type="tissue specificity">
    <text evidence="9">Expressed in lung and fetal brain. Weakly expressed in heart, adult brain, placenta, liver, skeletal muscle, kidney and pancreas.</text>
</comment>
<comment type="induction">
    <text evidence="8">By all-trans retinoic acid (ATRA). Induction is indirect and is mediated through other proteins.</text>
</comment>
<comment type="domain">
    <text>The C-terminal domain is essential for the homodimerization and the interaction with CBL. While the interaction with CBL is apparently mediated via the hydrophobic region of this domain, the highly charged region is apparently required for the homodimerization.</text>
</comment>
<comment type="sequence caution" evidence="12">
    <conflict type="erroneous initiation">
        <sequence resource="EMBL-CDS" id="AAH07042"/>
    </conflict>
    <text>Truncated N-terminus.</text>
</comment>
<comment type="sequence caution" evidence="12">
    <conflict type="erroneous initiation">
        <sequence resource="EMBL-CDS" id="BAG35478"/>
    </conflict>
    <text>Truncated N-terminus.</text>
</comment>
<name>SLAP1_HUMAN</name>
<reference key="1">
    <citation type="journal article" date="1995" name="Genomics">
        <title>Chromosomal localization of the mouse Src-like adapter protein (Slap) gene and its putative human homolog SLA.</title>
        <authorList>
            <person name="Angrist M."/>
            <person name="Wells D.E."/>
            <person name="Chakravarti A."/>
            <person name="Pandey A."/>
        </authorList>
    </citation>
    <scope>NUCLEOTIDE SEQUENCE [MRNA] (ISOFORM 1)</scope>
</reference>
<reference key="2">
    <citation type="journal article" date="1997" name="Biochem. Biophys. Res. Commun.">
        <title>Expression of Src-like adapter protein mRNA is induced by all-trans retinoic acid.</title>
        <authorList>
            <person name="Ohtsuki T."/>
            <person name="Hatake K."/>
            <person name="Ikeda M."/>
            <person name="Tomizuka H."/>
            <person name="Terui Y."/>
            <person name="Uwai M."/>
            <person name="Miura Y."/>
        </authorList>
    </citation>
    <scope>NUCLEOTIDE SEQUENCE [MRNA] (ISOFORM 1)</scope>
    <scope>INDUCTION BY ATRA</scope>
    <source>
        <tissue>Histiocytic lymphoma</tissue>
    </source>
</reference>
<reference key="3">
    <citation type="journal article" date="1998" name="Eur. J. Biochem.">
        <title>The gene for the human Src-like adaptor protein (hSLAP) is located within the 64-kb intron of the thyroglobulin gene.</title>
        <authorList>
            <person name="Meijerink P.H.S."/>
            <person name="Yanakiev P."/>
            <person name="Zorn I."/>
            <person name="Grierson A.J."/>
            <person name="Bikker H."/>
            <person name="Dye D."/>
            <person name="Kalaydjieva L."/>
            <person name="Baas F."/>
        </authorList>
    </citation>
    <scope>NUCLEOTIDE SEQUENCE [MRNA] (ISOFORM 1)</scope>
    <scope>TISSUE SPECIFICITY</scope>
    <source>
        <tissue>Fetal brain</tissue>
    </source>
</reference>
<reference key="4">
    <citation type="journal article" date="2001" name="J. Exp. Med.">
        <title>Functional cloning of Src-like adapter protein-2 (SLAP-2), a novel inhibitor of antigen receptor signaling.</title>
        <authorList>
            <person name="Holland S.J."/>
            <person name="Liao X.C."/>
            <person name="Mendenhall M.K."/>
            <person name="Zhou X."/>
            <person name="Pardo J."/>
            <person name="Chu P."/>
            <person name="Spencer C."/>
            <person name="Fu A.C."/>
            <person name="Sheng N."/>
            <person name="Yu P."/>
            <person name="Pali E."/>
            <person name="Nagin A."/>
            <person name="Shen M."/>
            <person name="Yu S."/>
            <person name="Chan E."/>
            <person name="Wu X."/>
            <person name="Li C."/>
            <person name="Woisetschlager M."/>
            <person name="Aversa G."/>
            <person name="Kolbinger F."/>
            <person name="Bennett M.K."/>
            <person name="Molineaux S."/>
            <person name="Luo Y."/>
            <person name="Payan D.G."/>
            <person name="Mancebo H.S.Y."/>
            <person name="Wu J."/>
        </authorList>
    </citation>
    <scope>NUCLEOTIDE SEQUENCE [MRNA] (ISOFORM 1)</scope>
    <scope>FUNCTION</scope>
</reference>
<reference key="5">
    <citation type="submission" date="2004-06" db="EMBL/GenBank/DDBJ databases">
        <title>Cloning of human full open reading frames in Gateway(TM) system entry vector (pDONR201).</title>
        <authorList>
            <person name="Ebert L."/>
            <person name="Schick M."/>
            <person name="Neubert P."/>
            <person name="Schatten R."/>
            <person name="Henze S."/>
            <person name="Korn B."/>
        </authorList>
    </citation>
    <scope>NUCLEOTIDE SEQUENCE [LARGE SCALE MRNA] (ISOFORM 1)</scope>
</reference>
<reference key="6">
    <citation type="journal article" date="2004" name="Nat. Genet.">
        <title>Complete sequencing and characterization of 21,243 full-length human cDNAs.</title>
        <authorList>
            <person name="Ota T."/>
            <person name="Suzuki Y."/>
            <person name="Nishikawa T."/>
            <person name="Otsuki T."/>
            <person name="Sugiyama T."/>
            <person name="Irie R."/>
            <person name="Wakamatsu A."/>
            <person name="Hayashi K."/>
            <person name="Sato H."/>
            <person name="Nagai K."/>
            <person name="Kimura K."/>
            <person name="Makita H."/>
            <person name="Sekine M."/>
            <person name="Obayashi M."/>
            <person name="Nishi T."/>
            <person name="Shibahara T."/>
            <person name="Tanaka T."/>
            <person name="Ishii S."/>
            <person name="Yamamoto J."/>
            <person name="Saito K."/>
            <person name="Kawai Y."/>
            <person name="Isono Y."/>
            <person name="Nakamura Y."/>
            <person name="Nagahari K."/>
            <person name="Murakami K."/>
            <person name="Yasuda T."/>
            <person name="Iwayanagi T."/>
            <person name="Wagatsuma M."/>
            <person name="Shiratori A."/>
            <person name="Sudo H."/>
            <person name="Hosoiri T."/>
            <person name="Kaku Y."/>
            <person name="Kodaira H."/>
            <person name="Kondo H."/>
            <person name="Sugawara M."/>
            <person name="Takahashi M."/>
            <person name="Kanda K."/>
            <person name="Yokoi T."/>
            <person name="Furuya T."/>
            <person name="Kikkawa E."/>
            <person name="Omura Y."/>
            <person name="Abe K."/>
            <person name="Kamihara K."/>
            <person name="Katsuta N."/>
            <person name="Sato K."/>
            <person name="Tanikawa M."/>
            <person name="Yamazaki M."/>
            <person name="Ninomiya K."/>
            <person name="Ishibashi T."/>
            <person name="Yamashita H."/>
            <person name="Murakawa K."/>
            <person name="Fujimori K."/>
            <person name="Tanai H."/>
            <person name="Kimata M."/>
            <person name="Watanabe M."/>
            <person name="Hiraoka S."/>
            <person name="Chiba Y."/>
            <person name="Ishida S."/>
            <person name="Ono Y."/>
            <person name="Takiguchi S."/>
            <person name="Watanabe S."/>
            <person name="Yosida M."/>
            <person name="Hotuta T."/>
            <person name="Kusano J."/>
            <person name="Kanehori K."/>
            <person name="Takahashi-Fujii A."/>
            <person name="Hara H."/>
            <person name="Tanase T.-O."/>
            <person name="Nomura Y."/>
            <person name="Togiya S."/>
            <person name="Komai F."/>
            <person name="Hara R."/>
            <person name="Takeuchi K."/>
            <person name="Arita M."/>
            <person name="Imose N."/>
            <person name="Musashino K."/>
            <person name="Yuuki H."/>
            <person name="Oshima A."/>
            <person name="Sasaki N."/>
            <person name="Aotsuka S."/>
            <person name="Yoshikawa Y."/>
            <person name="Matsunawa H."/>
            <person name="Ichihara T."/>
            <person name="Shiohata N."/>
            <person name="Sano S."/>
            <person name="Moriya S."/>
            <person name="Momiyama H."/>
            <person name="Satoh N."/>
            <person name="Takami S."/>
            <person name="Terashima Y."/>
            <person name="Suzuki O."/>
            <person name="Nakagawa S."/>
            <person name="Senoh A."/>
            <person name="Mizoguchi H."/>
            <person name="Goto Y."/>
            <person name="Shimizu F."/>
            <person name="Wakebe H."/>
            <person name="Hishigaki H."/>
            <person name="Watanabe T."/>
            <person name="Sugiyama A."/>
            <person name="Takemoto M."/>
            <person name="Kawakami B."/>
            <person name="Yamazaki M."/>
            <person name="Watanabe K."/>
            <person name="Kumagai A."/>
            <person name="Itakura S."/>
            <person name="Fukuzumi Y."/>
            <person name="Fujimori Y."/>
            <person name="Komiyama M."/>
            <person name="Tashiro H."/>
            <person name="Tanigami A."/>
            <person name="Fujiwara T."/>
            <person name="Ono T."/>
            <person name="Yamada K."/>
            <person name="Fujii Y."/>
            <person name="Ozaki K."/>
            <person name="Hirao M."/>
            <person name="Ohmori Y."/>
            <person name="Kawabata A."/>
            <person name="Hikiji T."/>
            <person name="Kobatake N."/>
            <person name="Inagaki H."/>
            <person name="Ikema Y."/>
            <person name="Okamoto S."/>
            <person name="Okitani R."/>
            <person name="Kawakami T."/>
            <person name="Noguchi S."/>
            <person name="Itoh T."/>
            <person name="Shigeta K."/>
            <person name="Senba T."/>
            <person name="Matsumura K."/>
            <person name="Nakajima Y."/>
            <person name="Mizuno T."/>
            <person name="Morinaga M."/>
            <person name="Sasaki M."/>
            <person name="Togashi T."/>
            <person name="Oyama M."/>
            <person name="Hata H."/>
            <person name="Watanabe M."/>
            <person name="Komatsu T."/>
            <person name="Mizushima-Sugano J."/>
            <person name="Satoh T."/>
            <person name="Shirai Y."/>
            <person name="Takahashi Y."/>
            <person name="Nakagawa K."/>
            <person name="Okumura K."/>
            <person name="Nagase T."/>
            <person name="Nomura N."/>
            <person name="Kikuchi H."/>
            <person name="Masuho Y."/>
            <person name="Yamashita R."/>
            <person name="Nakai K."/>
            <person name="Yada T."/>
            <person name="Nakamura Y."/>
            <person name="Ohara O."/>
            <person name="Isogai T."/>
            <person name="Sugano S."/>
        </authorList>
    </citation>
    <scope>NUCLEOTIDE SEQUENCE [LARGE SCALE MRNA] (ISOFORMS 2; 3 AND 4)</scope>
    <source>
        <tissue>Brain</tissue>
    </source>
</reference>
<reference key="7">
    <citation type="journal article" date="2006" name="Nature">
        <title>DNA sequence and analysis of human chromosome 8.</title>
        <authorList>
            <person name="Nusbaum C."/>
            <person name="Mikkelsen T.S."/>
            <person name="Zody M.C."/>
            <person name="Asakawa S."/>
            <person name="Taudien S."/>
            <person name="Garber M."/>
            <person name="Kodira C.D."/>
            <person name="Schueler M.G."/>
            <person name="Shimizu A."/>
            <person name="Whittaker C.A."/>
            <person name="Chang J.L."/>
            <person name="Cuomo C.A."/>
            <person name="Dewar K."/>
            <person name="FitzGerald M.G."/>
            <person name="Yang X."/>
            <person name="Allen N.R."/>
            <person name="Anderson S."/>
            <person name="Asakawa T."/>
            <person name="Blechschmidt K."/>
            <person name="Bloom T."/>
            <person name="Borowsky M.L."/>
            <person name="Butler J."/>
            <person name="Cook A."/>
            <person name="Corum B."/>
            <person name="DeArellano K."/>
            <person name="DeCaprio D."/>
            <person name="Dooley K.T."/>
            <person name="Dorris L. III"/>
            <person name="Engels R."/>
            <person name="Gloeckner G."/>
            <person name="Hafez N."/>
            <person name="Hagopian D.S."/>
            <person name="Hall J.L."/>
            <person name="Ishikawa S.K."/>
            <person name="Jaffe D.B."/>
            <person name="Kamat A."/>
            <person name="Kudoh J."/>
            <person name="Lehmann R."/>
            <person name="Lokitsang T."/>
            <person name="Macdonald P."/>
            <person name="Major J.E."/>
            <person name="Matthews C.D."/>
            <person name="Mauceli E."/>
            <person name="Menzel U."/>
            <person name="Mihalev A.H."/>
            <person name="Minoshima S."/>
            <person name="Murayama Y."/>
            <person name="Naylor J.W."/>
            <person name="Nicol R."/>
            <person name="Nguyen C."/>
            <person name="O'Leary S.B."/>
            <person name="O'Neill K."/>
            <person name="Parker S.C.J."/>
            <person name="Polley A."/>
            <person name="Raymond C.K."/>
            <person name="Reichwald K."/>
            <person name="Rodriguez J."/>
            <person name="Sasaki T."/>
            <person name="Schilhabel M."/>
            <person name="Siddiqui R."/>
            <person name="Smith C.L."/>
            <person name="Sneddon T.P."/>
            <person name="Talamas J.A."/>
            <person name="Tenzin P."/>
            <person name="Topham K."/>
            <person name="Venkataraman V."/>
            <person name="Wen G."/>
            <person name="Yamazaki S."/>
            <person name="Young S.K."/>
            <person name="Zeng Q."/>
            <person name="Zimmer A.R."/>
            <person name="Rosenthal A."/>
            <person name="Birren B.W."/>
            <person name="Platzer M."/>
            <person name="Shimizu N."/>
            <person name="Lander E.S."/>
        </authorList>
    </citation>
    <scope>NUCLEOTIDE SEQUENCE [LARGE SCALE GENOMIC DNA]</scope>
</reference>
<reference key="8">
    <citation type="submission" date="2005-07" db="EMBL/GenBank/DDBJ databases">
        <authorList>
            <person name="Mural R.J."/>
            <person name="Istrail S."/>
            <person name="Sutton G.G."/>
            <person name="Florea L."/>
            <person name="Halpern A.L."/>
            <person name="Mobarry C.M."/>
            <person name="Lippert R."/>
            <person name="Walenz B."/>
            <person name="Shatkay H."/>
            <person name="Dew I."/>
            <person name="Miller J.R."/>
            <person name="Flanigan M.J."/>
            <person name="Edwards N.J."/>
            <person name="Bolanos R."/>
            <person name="Fasulo D."/>
            <person name="Halldorsson B.V."/>
            <person name="Hannenhalli S."/>
            <person name="Turner R."/>
            <person name="Yooseph S."/>
            <person name="Lu F."/>
            <person name="Nusskern D.R."/>
            <person name="Shue B.C."/>
            <person name="Zheng X.H."/>
            <person name="Zhong F."/>
            <person name="Delcher A.L."/>
            <person name="Huson D.H."/>
            <person name="Kravitz S.A."/>
            <person name="Mouchard L."/>
            <person name="Reinert K."/>
            <person name="Remington K.A."/>
            <person name="Clark A.G."/>
            <person name="Waterman M.S."/>
            <person name="Eichler E.E."/>
            <person name="Adams M.D."/>
            <person name="Hunkapiller M.W."/>
            <person name="Myers E.W."/>
            <person name="Venter J.C."/>
        </authorList>
    </citation>
    <scope>NUCLEOTIDE SEQUENCE [LARGE SCALE GENOMIC DNA]</scope>
</reference>
<reference key="9">
    <citation type="journal article" date="2004" name="Genome Res.">
        <title>The status, quality, and expansion of the NIH full-length cDNA project: the Mammalian Gene Collection (MGC).</title>
        <authorList>
            <consortium name="The MGC Project Team"/>
        </authorList>
    </citation>
    <scope>NUCLEOTIDE SEQUENCE [LARGE SCALE MRNA] (ISOFORM 5)</scope>
    <source>
        <tissue>Bone marrow</tissue>
    </source>
</reference>
<reference key="10">
    <citation type="journal article" date="2001" name="Gene">
        <title>Characterization of promoter region and genomic structure of the murine and human genes encoding Src like adapter protein.</title>
        <authorList>
            <person name="Kratchmarova I."/>
            <person name="Sosinowski T."/>
            <person name="Weiss A."/>
            <person name="Witter K."/>
            <person name="Vincenz C."/>
            <person name="Pandey A."/>
        </authorList>
    </citation>
    <scope>NUCLEOTIDE SEQUENCE [MRNA] OF 1-72</scope>
</reference>
<reference key="11">
    <citation type="journal article" date="1999" name="Proc. Natl. Acad. Sci. U.S.A.">
        <title>SLAP, a dimeric adapter protein, plays a functional role in T cell receptor signaling.</title>
        <authorList>
            <person name="Tang J."/>
            <person name="Sawasdikosol S."/>
            <person name="Chang J.-H."/>
            <person name="Burakoff S.J."/>
        </authorList>
    </citation>
    <scope>FUNCTION</scope>
    <scope>HOMODIMERIZATION</scope>
    <scope>PHOSPHORYLATION</scope>
    <scope>INTERACTION WITH CBL; ZAP70; CD3Z; SYK AND LAT</scope>
    <scope>MUTAGENESIS OF ARG-111; LEU-218; LEU-224; LEU-229 AND 237-LEU--LEU-239</scope>
</reference>
<reference key="12">
    <citation type="journal article" date="2008" name="J. Proteome Res.">
        <title>Phosphoproteome of resting human platelets.</title>
        <authorList>
            <person name="Zahedi R.P."/>
            <person name="Lewandrowski U."/>
            <person name="Wiesner J."/>
            <person name="Wortelkamp S."/>
            <person name="Moebius J."/>
            <person name="Schuetz C."/>
            <person name="Walter U."/>
            <person name="Gambaryan S."/>
            <person name="Sickmann A."/>
        </authorList>
    </citation>
    <scope>IDENTIFICATION BY MASS SPECTROMETRY [LARGE SCALE ANALYSIS]</scope>
    <source>
        <tissue>Platelet</tissue>
    </source>
</reference>
<reference key="13">
    <citation type="journal article" date="2009" name="Sci. Signal.">
        <title>Quantitative phosphoproteomic analysis of T cell receptor signaling reveals system-wide modulation of protein-protein interactions.</title>
        <authorList>
            <person name="Mayya V."/>
            <person name="Lundgren D.H."/>
            <person name="Hwang S.-I."/>
            <person name="Rezaul K."/>
            <person name="Wu L."/>
            <person name="Eng J.K."/>
            <person name="Rodionov V."/>
            <person name="Han D.K."/>
        </authorList>
    </citation>
    <scope>IDENTIFICATION BY MASS SPECTROMETRY [LARGE SCALE ANALYSIS]</scope>
    <source>
        <tissue>Leukemic T-cell</tissue>
    </source>
</reference>
<reference key="14">
    <citation type="journal article" date="2014" name="J. Proteomics">
        <title>An enzyme assisted RP-RPLC approach for in-depth analysis of human liver phosphoproteome.</title>
        <authorList>
            <person name="Bian Y."/>
            <person name="Song C."/>
            <person name="Cheng K."/>
            <person name="Dong M."/>
            <person name="Wang F."/>
            <person name="Huang J."/>
            <person name="Sun D."/>
            <person name="Wang L."/>
            <person name="Ye M."/>
            <person name="Zou H."/>
        </authorList>
    </citation>
    <scope>IDENTIFICATION BY MASS SPECTROMETRY [LARGE SCALE ANALYSIS]</scope>
    <source>
        <tissue>Liver</tissue>
    </source>
</reference>
<reference key="15">
    <citation type="submission" date="2005-11" db="PDB data bank">
        <title>Solution structure of the SH3 domain of the human Src-like adapter protein (SLAP).</title>
        <authorList>
            <consortium name="RIKEN structural genomics initiative (RSGI)"/>
        </authorList>
    </citation>
    <scope>STRUCTURE BY NMR OF 15-80</scope>
</reference>
<organism>
    <name type="scientific">Homo sapiens</name>
    <name type="common">Human</name>
    <dbReference type="NCBI Taxonomy" id="9606"/>
    <lineage>
        <taxon>Eukaryota</taxon>
        <taxon>Metazoa</taxon>
        <taxon>Chordata</taxon>
        <taxon>Craniata</taxon>
        <taxon>Vertebrata</taxon>
        <taxon>Euteleostomi</taxon>
        <taxon>Mammalia</taxon>
        <taxon>Eutheria</taxon>
        <taxon>Euarchontoglires</taxon>
        <taxon>Primates</taxon>
        <taxon>Haplorrhini</taxon>
        <taxon>Catarrhini</taxon>
        <taxon>Hominidae</taxon>
        <taxon>Homo</taxon>
    </lineage>
</organism>
<protein>
    <recommendedName>
        <fullName>Src-like-adapter</fullName>
    </recommendedName>
    <alternativeName>
        <fullName>Src-like-adapter protein 1</fullName>
        <shortName>SLAP-1</shortName>
        <shortName>hSLAP</shortName>
    </alternativeName>
</protein>
<keyword id="KW-0002">3D-structure</keyword>
<keyword id="KW-0025">Alternative splicing</keyword>
<keyword id="KW-0963">Cytoplasm</keyword>
<keyword id="KW-0967">Endosome</keyword>
<keyword id="KW-0449">Lipoprotein</keyword>
<keyword id="KW-0519">Myristate</keyword>
<keyword id="KW-0597">Phosphoprotein</keyword>
<keyword id="KW-1267">Proteomics identification</keyword>
<keyword id="KW-1185">Reference proteome</keyword>
<keyword id="KW-0727">SH2 domain</keyword>
<keyword id="KW-0728">SH3 domain</keyword>